<evidence type="ECO:0000255" key="1">
    <source>
        <dbReference type="HAMAP-Rule" id="MF_00050"/>
    </source>
</evidence>
<sequence length="271" mass="28517">MANFTAADVKRLRELTGAGMLACKNALAESDGDFDKAVEALRIKGAKDVGKRAERATAEGLVAAKDGALIELNCETDFVAKNAEFQKLADDIVAAAVASKAADVDALKAASIGGQTVEEAIGALSAKIGEKLELRRVAIFGGTVETYLHRRAADLPPAVGVLVEYTGAGAEAAHAVALQIAALKARYLSREDVPEDLVASERRIAEETAKEEGKPEQALPKIVEGRLNGFFKDAVLLEQPSVSDSKKSVKALLDDAGVTVTQFVRFEVGQA</sequence>
<comment type="function">
    <text evidence="1">Associates with the EF-Tu.GDP complex and induces the exchange of GDP to GTP. It remains bound to the aminoacyl-tRNA.EF-Tu.GTP complex up to the GTP hydrolysis stage on the ribosome.</text>
</comment>
<comment type="subcellular location">
    <subcellularLocation>
        <location evidence="1">Cytoplasm</location>
    </subcellularLocation>
</comment>
<comment type="similarity">
    <text evidence="1">Belongs to the EF-Ts family.</text>
</comment>
<organism>
    <name type="scientific">Mycobacterium marinum (strain ATCC BAA-535 / M)</name>
    <dbReference type="NCBI Taxonomy" id="216594"/>
    <lineage>
        <taxon>Bacteria</taxon>
        <taxon>Bacillati</taxon>
        <taxon>Actinomycetota</taxon>
        <taxon>Actinomycetes</taxon>
        <taxon>Mycobacteriales</taxon>
        <taxon>Mycobacteriaceae</taxon>
        <taxon>Mycobacterium</taxon>
        <taxon>Mycobacterium ulcerans group</taxon>
    </lineage>
</organism>
<feature type="chain" id="PRO_1000116764" description="Elongation factor Ts">
    <location>
        <begin position="1"/>
        <end position="271"/>
    </location>
</feature>
<feature type="region of interest" description="Involved in Mg(2+) ion dislocation from EF-Tu" evidence="1">
    <location>
        <begin position="76"/>
        <end position="79"/>
    </location>
</feature>
<reference key="1">
    <citation type="journal article" date="2008" name="Genome Res.">
        <title>Insights from the complete genome sequence of Mycobacterium marinum on the evolution of Mycobacterium tuberculosis.</title>
        <authorList>
            <person name="Stinear T.P."/>
            <person name="Seemann T."/>
            <person name="Harrison P.F."/>
            <person name="Jenkin G.A."/>
            <person name="Davies J.K."/>
            <person name="Johnson P.D."/>
            <person name="Abdellah Z."/>
            <person name="Arrowsmith C."/>
            <person name="Chillingworth T."/>
            <person name="Churcher C."/>
            <person name="Clarke K."/>
            <person name="Cronin A."/>
            <person name="Davis P."/>
            <person name="Goodhead I."/>
            <person name="Holroyd N."/>
            <person name="Jagels K."/>
            <person name="Lord A."/>
            <person name="Moule S."/>
            <person name="Mungall K."/>
            <person name="Norbertczak H."/>
            <person name="Quail M.A."/>
            <person name="Rabbinowitsch E."/>
            <person name="Walker D."/>
            <person name="White B."/>
            <person name="Whitehead S."/>
            <person name="Small P.L."/>
            <person name="Brosch R."/>
            <person name="Ramakrishnan L."/>
            <person name="Fischbach M.A."/>
            <person name="Parkhill J."/>
            <person name="Cole S.T."/>
        </authorList>
    </citation>
    <scope>NUCLEOTIDE SEQUENCE [LARGE SCALE GENOMIC DNA]</scope>
    <source>
        <strain>ATCC BAA-535 / M</strain>
    </source>
</reference>
<gene>
    <name evidence="1" type="primary">tsf</name>
    <name type="ordered locus">MMAR_1820</name>
</gene>
<name>EFTS_MYCMM</name>
<proteinExistence type="inferred from homology"/>
<accession>B2HJN3</accession>
<dbReference type="EMBL" id="CP000854">
    <property type="protein sequence ID" value="ACC40269.1"/>
    <property type="molecule type" value="Genomic_DNA"/>
</dbReference>
<dbReference type="RefSeq" id="WP_011740116.1">
    <property type="nucleotide sequence ID" value="NC_010612.1"/>
</dbReference>
<dbReference type="SMR" id="B2HJN3"/>
<dbReference type="STRING" id="216594.MMAR_1820"/>
<dbReference type="GeneID" id="93436394"/>
<dbReference type="KEGG" id="mmi:MMAR_1820"/>
<dbReference type="eggNOG" id="COG0264">
    <property type="taxonomic scope" value="Bacteria"/>
</dbReference>
<dbReference type="HOGENOM" id="CLU_047155_0_0_11"/>
<dbReference type="OrthoDB" id="9808348at2"/>
<dbReference type="Proteomes" id="UP000001190">
    <property type="component" value="Chromosome"/>
</dbReference>
<dbReference type="GO" id="GO:0005737">
    <property type="term" value="C:cytoplasm"/>
    <property type="evidence" value="ECO:0007669"/>
    <property type="project" value="UniProtKB-SubCell"/>
</dbReference>
<dbReference type="GO" id="GO:0003746">
    <property type="term" value="F:translation elongation factor activity"/>
    <property type="evidence" value="ECO:0007669"/>
    <property type="project" value="UniProtKB-UniRule"/>
</dbReference>
<dbReference type="CDD" id="cd14275">
    <property type="entry name" value="UBA_EF-Ts"/>
    <property type="match status" value="1"/>
</dbReference>
<dbReference type="FunFam" id="1.10.286.20:FF:000001">
    <property type="entry name" value="Elongation factor Ts"/>
    <property type="match status" value="1"/>
</dbReference>
<dbReference type="FunFam" id="1.10.8.10:FF:000001">
    <property type="entry name" value="Elongation factor Ts"/>
    <property type="match status" value="1"/>
</dbReference>
<dbReference type="Gene3D" id="1.10.286.20">
    <property type="match status" value="1"/>
</dbReference>
<dbReference type="Gene3D" id="1.10.8.10">
    <property type="entry name" value="DNA helicase RuvA subunit, C-terminal domain"/>
    <property type="match status" value="1"/>
</dbReference>
<dbReference type="Gene3D" id="3.30.479.20">
    <property type="entry name" value="Elongation factor Ts, dimerisation domain"/>
    <property type="match status" value="2"/>
</dbReference>
<dbReference type="HAMAP" id="MF_00050">
    <property type="entry name" value="EF_Ts"/>
    <property type="match status" value="1"/>
</dbReference>
<dbReference type="InterPro" id="IPR036402">
    <property type="entry name" value="EF-Ts_dimer_sf"/>
</dbReference>
<dbReference type="InterPro" id="IPR001816">
    <property type="entry name" value="Transl_elong_EFTs/EF1B"/>
</dbReference>
<dbReference type="InterPro" id="IPR014039">
    <property type="entry name" value="Transl_elong_EFTs/EF1B_dimer"/>
</dbReference>
<dbReference type="InterPro" id="IPR018101">
    <property type="entry name" value="Transl_elong_Ts_CS"/>
</dbReference>
<dbReference type="InterPro" id="IPR009060">
    <property type="entry name" value="UBA-like_sf"/>
</dbReference>
<dbReference type="NCBIfam" id="TIGR00116">
    <property type="entry name" value="tsf"/>
    <property type="match status" value="1"/>
</dbReference>
<dbReference type="PANTHER" id="PTHR11741">
    <property type="entry name" value="ELONGATION FACTOR TS"/>
    <property type="match status" value="1"/>
</dbReference>
<dbReference type="PANTHER" id="PTHR11741:SF0">
    <property type="entry name" value="ELONGATION FACTOR TS, MITOCHONDRIAL"/>
    <property type="match status" value="1"/>
</dbReference>
<dbReference type="Pfam" id="PF00889">
    <property type="entry name" value="EF_TS"/>
    <property type="match status" value="1"/>
</dbReference>
<dbReference type="SUPFAM" id="SSF54713">
    <property type="entry name" value="Elongation factor Ts (EF-Ts), dimerisation domain"/>
    <property type="match status" value="1"/>
</dbReference>
<dbReference type="SUPFAM" id="SSF46934">
    <property type="entry name" value="UBA-like"/>
    <property type="match status" value="1"/>
</dbReference>
<dbReference type="PROSITE" id="PS01126">
    <property type="entry name" value="EF_TS_1"/>
    <property type="match status" value="1"/>
</dbReference>
<dbReference type="PROSITE" id="PS01127">
    <property type="entry name" value="EF_TS_2"/>
    <property type="match status" value="1"/>
</dbReference>
<protein>
    <recommendedName>
        <fullName evidence="1">Elongation factor Ts</fullName>
        <shortName evidence="1">EF-Ts</shortName>
    </recommendedName>
</protein>
<keyword id="KW-0963">Cytoplasm</keyword>
<keyword id="KW-0251">Elongation factor</keyword>
<keyword id="KW-0648">Protein biosynthesis</keyword>
<keyword id="KW-1185">Reference proteome</keyword>